<proteinExistence type="inferred from homology"/>
<accession>A0R609</accession>
<accession>I7GAP8</accession>
<accession>O05763</accession>
<accession>Q59557</accession>
<sequence>MPEDRPIEDSPPIGEAQTDAPAGGCPAGFGRIKPPVAGGSNRDWWPNQLNLKILQKNPDVINPLDEDFDYRSAVQNLDVDALRADIVEVMHTSQDWWPADFGHYGPLFIRMAWHAAGTYRVSDGRGGAGAGMQRFAPLNSWPDNASLDKARRLLWPVKKKYGKNLSWADLIVYAGNVALEDMGFRTAGFAFGREDRWEPEEDVYWGPEQEWLDDKRYTGERDLENPLAAVQMGLIYVNPEGPNGNPDPQASAIDIRETFGRMAMNDVETAALIVGGHTFGKTHGNGDASLVGPEPEAAPLEEVGLGWRNPQGTGVGKDAITSGLEVTWTHTPTKWDNSFLEILYGNEWELTKSPAGANQWKPKDNGWANSVPLAHEDGKTHPSMLTSDLALRVDPIYEQITRRWLDHPEELAEEFAKAWFKLLHRDMGPVTRYLGPEVPKDTWLWQDNIPAGNDLSDDEVAKLKELIADSGLTVSQLVSTAWKAASTFRSSDLRGGANGGRIRLQPQLGWEANEPDELAQVVRKYEEIQKASGINVSFADLVVLGGNVGVEKAAKAAGFDVTVPFTPGRGDATQEETDVDSFAYLEPKADGFRNYLGKGSDLPAEFKLIDRANLLGLSAPEMTTLVGGLRVLDVNHGGTKHGVLTDKPGALTTDFFVNLLDMSTAWKPSPADDGTYIGTDRATGSPKWTGTRVDLVFASNSQLRALAEVYAEDDSKEKFVKDFVAAWTKVMDADRFDVA</sequence>
<comment type="function">
    <text>Bifunctional enzyme with both catalase and broad-spectrum peroxidase activity. May play a role in the intracellular survival of mycobacteria.</text>
</comment>
<comment type="catalytic activity">
    <reaction evidence="1">
        <text>H2O2 + AH2 = A + 2 H2O</text>
        <dbReference type="Rhea" id="RHEA:30275"/>
        <dbReference type="ChEBI" id="CHEBI:13193"/>
        <dbReference type="ChEBI" id="CHEBI:15377"/>
        <dbReference type="ChEBI" id="CHEBI:16240"/>
        <dbReference type="ChEBI" id="CHEBI:17499"/>
        <dbReference type="EC" id="1.11.1.21"/>
    </reaction>
</comment>
<comment type="catalytic activity">
    <reaction evidence="1">
        <text>2 H2O2 = O2 + 2 H2O</text>
        <dbReference type="Rhea" id="RHEA:20309"/>
        <dbReference type="ChEBI" id="CHEBI:15377"/>
        <dbReference type="ChEBI" id="CHEBI:15379"/>
        <dbReference type="ChEBI" id="CHEBI:16240"/>
        <dbReference type="EC" id="1.11.1.21"/>
    </reaction>
</comment>
<comment type="cofactor">
    <cofactor>
        <name>heme b</name>
        <dbReference type="ChEBI" id="CHEBI:60344"/>
    </cofactor>
    <text>Binds 1 heme b (iron(II)-protoporphyrin IX) group per dimer.</text>
</comment>
<comment type="subunit">
    <text evidence="1">Homodimer or homotetramer.</text>
</comment>
<comment type="PTM">
    <text evidence="1">Formation of the three residue Trp-Tyr-Met cross-link is important for the catalase, but not the peroxidase activity of the enzyme.</text>
</comment>
<comment type="disruption phenotype">
    <text evidence="3">Defects cause isoniazid (INH) resistance.</text>
</comment>
<comment type="similarity">
    <text evidence="1">Belongs to the peroxidase family. Peroxidase/catalase subfamily.</text>
</comment>
<reference key="1">
    <citation type="journal article" date="1996" name="FEMS Microbiol. Lett.">
        <title>Analysis of isoniazid-resistant transposon mutants of Mycobacterium smegmatis.</title>
        <authorList>
            <person name="Billman-Jacobe H."/>
            <person name="Sloan J."/>
            <person name="Coppel R.L."/>
        </authorList>
    </citation>
    <scope>NUCLEOTIDE SEQUENCE [GENOMIC DNA]</scope>
    <scope>DISRUPTION PHENOTYPE</scope>
</reference>
<reference key="2">
    <citation type="submission" date="2006-10" db="EMBL/GenBank/DDBJ databases">
        <authorList>
            <person name="Fleischmann R.D."/>
            <person name="Dodson R.J."/>
            <person name="Haft D.H."/>
            <person name="Merkel J.S."/>
            <person name="Nelson W.C."/>
            <person name="Fraser C.M."/>
        </authorList>
    </citation>
    <scope>NUCLEOTIDE SEQUENCE [LARGE SCALE GENOMIC DNA]</scope>
    <source>
        <strain>ATCC 700084 / mc(2)155</strain>
    </source>
</reference>
<reference key="3">
    <citation type="journal article" date="2007" name="Genome Biol.">
        <title>Interrupted coding sequences in Mycobacterium smegmatis: authentic mutations or sequencing errors?</title>
        <authorList>
            <person name="Deshayes C."/>
            <person name="Perrodou E."/>
            <person name="Gallien S."/>
            <person name="Euphrasie D."/>
            <person name="Schaeffer C."/>
            <person name="Van-Dorsselaer A."/>
            <person name="Poch O."/>
            <person name="Lecompte O."/>
            <person name="Reyrat J.-M."/>
        </authorList>
    </citation>
    <scope>NUCLEOTIDE SEQUENCE [LARGE SCALE GENOMIC DNA]</scope>
    <source>
        <strain>ATCC 700084 / mc(2)155</strain>
    </source>
</reference>
<reference key="4">
    <citation type="journal article" date="2009" name="Genome Res.">
        <title>Ortho-proteogenomics: multiple proteomes investigation through orthology and a new MS-based protocol.</title>
        <authorList>
            <person name="Gallien S."/>
            <person name="Perrodou E."/>
            <person name="Carapito C."/>
            <person name="Deshayes C."/>
            <person name="Reyrat J.-M."/>
            <person name="Van Dorsselaer A."/>
            <person name="Poch O."/>
            <person name="Schaeffer C."/>
            <person name="Lecompte O."/>
        </authorList>
    </citation>
    <scope>NUCLEOTIDE SEQUENCE [LARGE SCALE GENOMIC DNA]</scope>
    <source>
        <strain>ATCC 700084 / mc(2)155</strain>
    </source>
</reference>
<name>KATG1_MYCS2</name>
<evidence type="ECO:0000255" key="1">
    <source>
        <dbReference type="HAMAP-Rule" id="MF_01961"/>
    </source>
</evidence>
<evidence type="ECO:0000256" key="2">
    <source>
        <dbReference type="SAM" id="MobiDB-lite"/>
    </source>
</evidence>
<evidence type="ECO:0000269" key="3">
    <source>
    </source>
</evidence>
<evidence type="ECO:0000305" key="4"/>
<keyword id="KW-0349">Heme</keyword>
<keyword id="KW-0376">Hydrogen peroxide</keyword>
<keyword id="KW-0408">Iron</keyword>
<keyword id="KW-0479">Metal-binding</keyword>
<keyword id="KW-0560">Oxidoreductase</keyword>
<keyword id="KW-0575">Peroxidase</keyword>
<keyword id="KW-1185">Reference proteome</keyword>
<dbReference type="EC" id="1.11.1.21" evidence="1"/>
<dbReference type="EMBL" id="X98718">
    <property type="protein sequence ID" value="CAA67268.1"/>
    <property type="molecule type" value="Genomic_DNA"/>
</dbReference>
<dbReference type="EMBL" id="CP000480">
    <property type="protein sequence ID" value="ABK73944.1"/>
    <property type="molecule type" value="Genomic_DNA"/>
</dbReference>
<dbReference type="EMBL" id="CP001663">
    <property type="protein sequence ID" value="AFP42642.1"/>
    <property type="molecule type" value="Genomic_DNA"/>
</dbReference>
<dbReference type="RefSeq" id="WP_011731250.1">
    <property type="nucleotide sequence ID" value="NC_008596.1"/>
</dbReference>
<dbReference type="RefSeq" id="YP_890597.1">
    <property type="nucleotide sequence ID" value="NC_008596.1"/>
</dbReference>
<dbReference type="SMR" id="A0R609"/>
<dbReference type="STRING" id="246196.MSMEG_6384"/>
<dbReference type="PeroxiBase" id="3550">
    <property type="entry name" value="MsmCP01_mc2155"/>
</dbReference>
<dbReference type="PaxDb" id="246196-MSMEI_6216"/>
<dbReference type="GeneID" id="93460997"/>
<dbReference type="KEGG" id="msb:LJ00_31555"/>
<dbReference type="KEGG" id="msg:MSMEI_6216"/>
<dbReference type="KEGG" id="msm:MSMEG_6384"/>
<dbReference type="PATRIC" id="fig|246196.19.peg.6211"/>
<dbReference type="eggNOG" id="COG0376">
    <property type="taxonomic scope" value="Bacteria"/>
</dbReference>
<dbReference type="OrthoDB" id="9759743at2"/>
<dbReference type="Proteomes" id="UP000000757">
    <property type="component" value="Chromosome"/>
</dbReference>
<dbReference type="Proteomes" id="UP000006158">
    <property type="component" value="Chromosome"/>
</dbReference>
<dbReference type="GO" id="GO:0005829">
    <property type="term" value="C:cytosol"/>
    <property type="evidence" value="ECO:0007669"/>
    <property type="project" value="TreeGrafter"/>
</dbReference>
<dbReference type="GO" id="GO:0004096">
    <property type="term" value="F:catalase activity"/>
    <property type="evidence" value="ECO:0007669"/>
    <property type="project" value="UniProtKB-UniRule"/>
</dbReference>
<dbReference type="GO" id="GO:0020037">
    <property type="term" value="F:heme binding"/>
    <property type="evidence" value="ECO:0007669"/>
    <property type="project" value="InterPro"/>
</dbReference>
<dbReference type="GO" id="GO:0046872">
    <property type="term" value="F:metal ion binding"/>
    <property type="evidence" value="ECO:0007669"/>
    <property type="project" value="UniProtKB-KW"/>
</dbReference>
<dbReference type="GO" id="GO:0070301">
    <property type="term" value="P:cellular response to hydrogen peroxide"/>
    <property type="evidence" value="ECO:0007669"/>
    <property type="project" value="TreeGrafter"/>
</dbReference>
<dbReference type="GO" id="GO:0042744">
    <property type="term" value="P:hydrogen peroxide catabolic process"/>
    <property type="evidence" value="ECO:0007669"/>
    <property type="project" value="UniProtKB-KW"/>
</dbReference>
<dbReference type="CDD" id="cd00649">
    <property type="entry name" value="catalase_peroxidase_1"/>
    <property type="match status" value="1"/>
</dbReference>
<dbReference type="CDD" id="cd08200">
    <property type="entry name" value="catalase_peroxidase_2"/>
    <property type="match status" value="1"/>
</dbReference>
<dbReference type="FunFam" id="1.10.420.10:FF:000002">
    <property type="entry name" value="Catalase-peroxidase"/>
    <property type="match status" value="1"/>
</dbReference>
<dbReference type="FunFam" id="1.10.420.10:FF:000004">
    <property type="entry name" value="Catalase-peroxidase"/>
    <property type="match status" value="1"/>
</dbReference>
<dbReference type="FunFam" id="1.10.520.10:FF:000002">
    <property type="entry name" value="Catalase-peroxidase"/>
    <property type="match status" value="1"/>
</dbReference>
<dbReference type="Gene3D" id="1.10.520.10">
    <property type="match status" value="2"/>
</dbReference>
<dbReference type="Gene3D" id="1.10.420.10">
    <property type="entry name" value="Peroxidase, domain 2"/>
    <property type="match status" value="2"/>
</dbReference>
<dbReference type="HAMAP" id="MF_01961">
    <property type="entry name" value="Catal_peroxid"/>
    <property type="match status" value="1"/>
</dbReference>
<dbReference type="InterPro" id="IPR000763">
    <property type="entry name" value="Catalase_peroxidase"/>
</dbReference>
<dbReference type="InterPro" id="IPR002016">
    <property type="entry name" value="Haem_peroxidase"/>
</dbReference>
<dbReference type="InterPro" id="IPR010255">
    <property type="entry name" value="Haem_peroxidase_sf"/>
</dbReference>
<dbReference type="InterPro" id="IPR019794">
    <property type="entry name" value="Peroxidases_AS"/>
</dbReference>
<dbReference type="InterPro" id="IPR019793">
    <property type="entry name" value="Peroxidases_heam-ligand_BS"/>
</dbReference>
<dbReference type="NCBIfam" id="TIGR00198">
    <property type="entry name" value="cat_per_HPI"/>
    <property type="match status" value="1"/>
</dbReference>
<dbReference type="NCBIfam" id="NF011635">
    <property type="entry name" value="PRK15061.1"/>
    <property type="match status" value="1"/>
</dbReference>
<dbReference type="PANTHER" id="PTHR30555:SF0">
    <property type="entry name" value="CATALASE-PEROXIDASE"/>
    <property type="match status" value="1"/>
</dbReference>
<dbReference type="PANTHER" id="PTHR30555">
    <property type="entry name" value="HYDROPEROXIDASE I, BIFUNCTIONAL CATALASE-PEROXIDASE"/>
    <property type="match status" value="1"/>
</dbReference>
<dbReference type="Pfam" id="PF00141">
    <property type="entry name" value="peroxidase"/>
    <property type="match status" value="2"/>
</dbReference>
<dbReference type="PRINTS" id="PR00460">
    <property type="entry name" value="BPEROXIDASE"/>
</dbReference>
<dbReference type="PRINTS" id="PR00458">
    <property type="entry name" value="PEROXIDASE"/>
</dbReference>
<dbReference type="SUPFAM" id="SSF48113">
    <property type="entry name" value="Heme-dependent peroxidases"/>
    <property type="match status" value="2"/>
</dbReference>
<dbReference type="PROSITE" id="PS00435">
    <property type="entry name" value="PEROXIDASE_1"/>
    <property type="match status" value="1"/>
</dbReference>
<dbReference type="PROSITE" id="PS00436">
    <property type="entry name" value="PEROXIDASE_2"/>
    <property type="match status" value="1"/>
</dbReference>
<dbReference type="PROSITE" id="PS50873">
    <property type="entry name" value="PEROXIDASE_4"/>
    <property type="match status" value="1"/>
</dbReference>
<organism>
    <name type="scientific">Mycolicibacterium smegmatis (strain ATCC 700084 / mc(2)155)</name>
    <name type="common">Mycobacterium smegmatis</name>
    <dbReference type="NCBI Taxonomy" id="246196"/>
    <lineage>
        <taxon>Bacteria</taxon>
        <taxon>Bacillati</taxon>
        <taxon>Actinomycetota</taxon>
        <taxon>Actinomycetes</taxon>
        <taxon>Mycobacteriales</taxon>
        <taxon>Mycobacteriaceae</taxon>
        <taxon>Mycolicibacterium</taxon>
    </lineage>
</organism>
<protein>
    <recommendedName>
        <fullName evidence="1">Catalase-peroxidase 1</fullName>
        <shortName evidence="1">CP 1</shortName>
        <ecNumber evidence="1">1.11.1.21</ecNumber>
    </recommendedName>
    <alternativeName>
        <fullName evidence="1">Peroxidase/catalase 1</fullName>
    </alternativeName>
</protein>
<feature type="chain" id="PRO_0000293596" description="Catalase-peroxidase 1">
    <location>
        <begin position="1"/>
        <end position="739"/>
    </location>
</feature>
<feature type="region of interest" description="Disordered" evidence="2">
    <location>
        <begin position="1"/>
        <end position="33"/>
    </location>
</feature>
<feature type="active site" description="Proton acceptor" evidence="1">
    <location>
        <position position="114"/>
    </location>
</feature>
<feature type="binding site" description="axial binding residue" evidence="1">
    <location>
        <position position="277"/>
    </location>
    <ligand>
        <name>heme b</name>
        <dbReference type="ChEBI" id="CHEBI:60344"/>
    </ligand>
    <ligandPart>
        <name>Fe</name>
        <dbReference type="ChEBI" id="CHEBI:18248"/>
    </ligandPart>
</feature>
<feature type="site" description="Transition state stabilizer" evidence="1">
    <location>
        <position position="110"/>
    </location>
</feature>
<feature type="cross-link" description="Tryptophyl-tyrosyl-methioninium (Trp-Tyr) (with M-262)" evidence="1">
    <location>
        <begin position="113"/>
        <end position="236"/>
    </location>
</feature>
<feature type="cross-link" description="Tryptophyl-tyrosyl-methioninium (Tyr-Met) (with W-113)" evidence="1">
    <location>
        <begin position="236"/>
        <end position="262"/>
    </location>
</feature>
<feature type="sequence conflict" description="In Ref. 1; CAA67268." evidence="4" ref="1">
    <original>AHEDG</original>
    <variation>PTRTA</variation>
    <location>
        <begin position="374"/>
        <end position="378"/>
    </location>
</feature>
<gene>
    <name evidence="1" type="primary">katG1</name>
    <name type="ordered locus">MSMEG_6384</name>
    <name type="ordered locus">MSMEI_6216</name>
</gene>